<proteinExistence type="evidence at protein level"/>
<organism>
    <name type="scientific">Homo sapiens</name>
    <name type="common">Human</name>
    <dbReference type="NCBI Taxonomy" id="9606"/>
    <lineage>
        <taxon>Eukaryota</taxon>
        <taxon>Metazoa</taxon>
        <taxon>Chordata</taxon>
        <taxon>Craniata</taxon>
        <taxon>Vertebrata</taxon>
        <taxon>Euteleostomi</taxon>
        <taxon>Mammalia</taxon>
        <taxon>Eutheria</taxon>
        <taxon>Euarchontoglires</taxon>
        <taxon>Primates</taxon>
        <taxon>Haplorrhini</taxon>
        <taxon>Catarrhini</taxon>
        <taxon>Hominidae</taxon>
        <taxon>Homo</taxon>
    </lineage>
</organism>
<feature type="chain" id="PRO_0000251204" description="Transmembrane protein 117">
    <location>
        <begin position="1"/>
        <end position="514"/>
    </location>
</feature>
<feature type="topological domain" description="Cytoplasmic" evidence="7">
    <location>
        <begin position="1"/>
        <end position="15"/>
    </location>
</feature>
<feature type="transmembrane region" description="Helical" evidence="2">
    <location>
        <begin position="16"/>
        <end position="36"/>
    </location>
</feature>
<feature type="topological domain" description="Extracellular" evidence="7">
    <location>
        <begin position="37"/>
        <end position="65"/>
    </location>
</feature>
<feature type="transmembrane region" description="Helical" evidence="2">
    <location>
        <begin position="66"/>
        <end position="86"/>
    </location>
</feature>
<feature type="topological domain" description="Cytoplasmic" evidence="7">
    <location>
        <begin position="87"/>
        <end position="110"/>
    </location>
</feature>
<feature type="transmembrane region" description="Helical" evidence="2">
    <location>
        <begin position="111"/>
        <end position="131"/>
    </location>
</feature>
<feature type="topological domain" description="Extracellular" evidence="7">
    <location>
        <begin position="132"/>
        <end position="154"/>
    </location>
</feature>
<feature type="transmembrane region" description="Helical" evidence="2">
    <location>
        <begin position="155"/>
        <end position="175"/>
    </location>
</feature>
<feature type="topological domain" description="Cytoplasmic" evidence="7">
    <location>
        <begin position="176"/>
        <end position="198"/>
    </location>
</feature>
<feature type="transmembrane region" description="Helical" evidence="2">
    <location>
        <begin position="199"/>
        <end position="219"/>
    </location>
</feature>
<feature type="topological domain" description="Extracellular" evidence="7">
    <location>
        <begin position="220"/>
        <end position="239"/>
    </location>
</feature>
<feature type="transmembrane region" description="Helical" evidence="2">
    <location>
        <begin position="240"/>
        <end position="260"/>
    </location>
</feature>
<feature type="topological domain" description="Cytoplasmic" evidence="7">
    <location>
        <begin position="261"/>
        <end position="295"/>
    </location>
</feature>
<feature type="transmembrane region" description="Helical" evidence="2">
    <location>
        <begin position="296"/>
        <end position="316"/>
    </location>
</feature>
<feature type="topological domain" description="Extracellular" evidence="7">
    <location>
        <begin position="317"/>
        <end position="394"/>
    </location>
</feature>
<feature type="transmembrane region" description="Helical" evidence="2">
    <location>
        <begin position="395"/>
        <end position="415"/>
    </location>
</feature>
<feature type="topological domain" description="Cytoplasmic" evidence="7">
    <location>
        <begin position="416"/>
        <end position="514"/>
    </location>
</feature>
<feature type="region of interest" description="Disordered" evidence="3">
    <location>
        <begin position="429"/>
        <end position="459"/>
    </location>
</feature>
<feature type="region of interest" description="Disordered" evidence="3">
    <location>
        <begin position="486"/>
        <end position="514"/>
    </location>
</feature>
<feature type="compositionally biased region" description="Basic and acidic residues" evidence="3">
    <location>
        <begin position="438"/>
        <end position="448"/>
    </location>
</feature>
<feature type="modified residue" description="Phosphothreonine" evidence="1">
    <location>
        <position position="453"/>
    </location>
</feature>
<feature type="glycosylation site" description="N-linked (GlcNAc...) asparagine" evidence="4">
    <location>
        <position position="353"/>
    </location>
</feature>
<feature type="glycosylation site" description="N-linked (GlcNAc...) asparagine" evidence="4">
    <location>
        <position position="371"/>
    </location>
</feature>
<feature type="sequence variant" id="VAR_027660" description="In dbSNP:rs1948516.">
    <original>R</original>
    <variation>H</variation>
    <location>
        <position position="90"/>
    </location>
</feature>
<feature type="mutagenesis site" description="Reduced N-glycosylation. Loss of N-glycosylation; when associated with A-371." evidence="4">
    <original>N</original>
    <variation>A</variation>
    <location>
        <position position="353"/>
    </location>
</feature>
<feature type="mutagenesis site" description="Reduced N-glycosylation. Loss of N-glycosylation; when associated with A-353." evidence="4">
    <original>N</original>
    <variation>A</variation>
    <location>
        <position position="371"/>
    </location>
</feature>
<gene>
    <name type="primary">TMEM117</name>
</gene>
<sequence>MGKDFRYYFQHPWSRMIVAYLVIFFNFLIFAEDPVSHSQTEANVIVVGNCFSFVTNKYPRGVGWRILKVLLWLLAILTGLIAGKFLFHQRLFGQLLRLKMFREDHGSWMTMFFSTILFLFIFSHIYNTILLMDGNMGAYIITDYMGIRNESFMKLAAVGTWMGDFVTAWMVTDMMLQDKPYPDWGKSARAFWKKGNVRITLFWTVLFTLTSVVVLVITTDWISWDKLNRGFLPSDEVSRAFLASFILVFDLLIVMQDWEFPHFMGDVDVNLPGLHTPHMQFKIPFFQKIFKEEYRIHITGKWFNYGIIFLVLILDLNMWKNQIFYKPHEYGQYIGPGQKIYTVKDSESLKDLNRTKLSWEWRSNHTNPRTNKTYVEGDMFLHSRFIGASLDVKCLAFVPSLIAFVWFGFFIWFFGRFLKNEPRMENQDKTYTRMKRKSPSEHSKDMGITRENTQASVEDPLNDPSLVCIRSDFNEIVYKSSHLTSENLSSQLNESTSATEADQDPTTSKSTPTN</sequence>
<keyword id="KW-1003">Cell membrane</keyword>
<keyword id="KW-0325">Glycoprotein</keyword>
<keyword id="KW-0472">Membrane</keyword>
<keyword id="KW-0597">Phosphoprotein</keyword>
<keyword id="KW-1267">Proteomics identification</keyword>
<keyword id="KW-1185">Reference proteome</keyword>
<keyword id="KW-0812">Transmembrane</keyword>
<keyword id="KW-1133">Transmembrane helix</keyword>
<evidence type="ECO:0000250" key="1">
    <source>
        <dbReference type="UniProtKB" id="Q8BH18"/>
    </source>
</evidence>
<evidence type="ECO:0000255" key="2"/>
<evidence type="ECO:0000256" key="3">
    <source>
        <dbReference type="SAM" id="MobiDB-lite"/>
    </source>
</evidence>
<evidence type="ECO:0000269" key="4">
    <source>
    </source>
</evidence>
<evidence type="ECO:0000269" key="5">
    <source>
    </source>
</evidence>
<evidence type="ECO:0000305" key="6"/>
<evidence type="ECO:0000305" key="7">
    <source>
    </source>
</evidence>
<protein>
    <recommendedName>
        <fullName>Transmembrane protein 117</fullName>
    </recommendedName>
</protein>
<accession>Q9H0C3</accession>
<dbReference type="EMBL" id="AL136855">
    <property type="protein sequence ID" value="CAB66789.1"/>
    <property type="molecule type" value="mRNA"/>
</dbReference>
<dbReference type="EMBL" id="AK057287">
    <property type="protein sequence ID" value="BAB71411.1"/>
    <property type="molecule type" value="mRNA"/>
</dbReference>
<dbReference type="EMBL" id="BC060798">
    <property type="protein sequence ID" value="AAH60798.1"/>
    <property type="molecule type" value="mRNA"/>
</dbReference>
<dbReference type="CCDS" id="CCDS8745.1"/>
<dbReference type="RefSeq" id="NP_001273142.1">
    <property type="nucleotide sequence ID" value="NM_001286213.1"/>
</dbReference>
<dbReference type="RefSeq" id="NP_115632.1">
    <property type="nucleotide sequence ID" value="NM_032256.3"/>
</dbReference>
<dbReference type="RefSeq" id="XP_011537133.1">
    <property type="nucleotide sequence ID" value="XM_011538831.2"/>
</dbReference>
<dbReference type="RefSeq" id="XP_011537134.1">
    <property type="nucleotide sequence ID" value="XM_011538832.3"/>
</dbReference>
<dbReference type="RefSeq" id="XP_047285618.1">
    <property type="nucleotide sequence ID" value="XM_047429662.1"/>
</dbReference>
<dbReference type="RefSeq" id="XP_054229432.1">
    <property type="nucleotide sequence ID" value="XM_054373457.1"/>
</dbReference>
<dbReference type="RefSeq" id="XP_054229433.1">
    <property type="nucleotide sequence ID" value="XM_054373458.1"/>
</dbReference>
<dbReference type="SMR" id="Q9H0C3"/>
<dbReference type="BioGRID" id="123950">
    <property type="interactions" value="1"/>
</dbReference>
<dbReference type="FunCoup" id="Q9H0C3">
    <property type="interactions" value="1168"/>
</dbReference>
<dbReference type="STRING" id="9606.ENSP00000266534"/>
<dbReference type="TCDB" id="9.B.366.1.1">
    <property type="family name" value="the tmem117 (tmem117) family"/>
</dbReference>
<dbReference type="GlyCosmos" id="Q9H0C3">
    <property type="glycosylation" value="2 sites, No reported glycans"/>
</dbReference>
<dbReference type="GlyGen" id="Q9H0C3">
    <property type="glycosylation" value="2 sites"/>
</dbReference>
<dbReference type="iPTMnet" id="Q9H0C3"/>
<dbReference type="PhosphoSitePlus" id="Q9H0C3"/>
<dbReference type="BioMuta" id="TMEM117"/>
<dbReference type="DMDM" id="74733520"/>
<dbReference type="jPOST" id="Q9H0C3"/>
<dbReference type="MassIVE" id="Q9H0C3"/>
<dbReference type="PaxDb" id="9606-ENSP00000266534"/>
<dbReference type="PeptideAtlas" id="Q9H0C3"/>
<dbReference type="Antibodypedia" id="25193">
    <property type="antibodies" value="91 antibodies from 17 providers"/>
</dbReference>
<dbReference type="DNASU" id="84216"/>
<dbReference type="Ensembl" id="ENST00000266534.8">
    <property type="protein sequence ID" value="ENSP00000266534.3"/>
    <property type="gene ID" value="ENSG00000139173.10"/>
</dbReference>
<dbReference type="GeneID" id="84216"/>
<dbReference type="KEGG" id="hsa:84216"/>
<dbReference type="MANE-Select" id="ENST00000266534.8">
    <property type="protein sequence ID" value="ENSP00000266534.3"/>
    <property type="RefSeq nucleotide sequence ID" value="NM_032256.3"/>
    <property type="RefSeq protein sequence ID" value="NP_115632.1"/>
</dbReference>
<dbReference type="UCSC" id="uc001rod.5">
    <property type="organism name" value="human"/>
</dbReference>
<dbReference type="AGR" id="HGNC:25308"/>
<dbReference type="CTD" id="84216"/>
<dbReference type="GeneCards" id="TMEM117"/>
<dbReference type="HGNC" id="HGNC:25308">
    <property type="gene designation" value="TMEM117"/>
</dbReference>
<dbReference type="HPA" id="ENSG00000139173">
    <property type="expression patterns" value="Low tissue specificity"/>
</dbReference>
<dbReference type="neXtProt" id="NX_Q9H0C3"/>
<dbReference type="OpenTargets" id="ENSG00000139173"/>
<dbReference type="PharmGKB" id="PA143485638"/>
<dbReference type="VEuPathDB" id="HostDB:ENSG00000139173"/>
<dbReference type="eggNOG" id="ENOG502QXR1">
    <property type="taxonomic scope" value="Eukaryota"/>
</dbReference>
<dbReference type="GeneTree" id="ENSGT00390000013052"/>
<dbReference type="HOGENOM" id="CLU_047657_0_0_1"/>
<dbReference type="InParanoid" id="Q9H0C3"/>
<dbReference type="OMA" id="QMIFKEE"/>
<dbReference type="OrthoDB" id="9528589at2759"/>
<dbReference type="PAN-GO" id="Q9H0C3">
    <property type="GO annotations" value="1 GO annotation based on evolutionary models"/>
</dbReference>
<dbReference type="PhylomeDB" id="Q9H0C3"/>
<dbReference type="TreeFam" id="TF336012"/>
<dbReference type="PathwayCommons" id="Q9H0C3"/>
<dbReference type="SignaLink" id="Q9H0C3"/>
<dbReference type="BioGRID-ORCS" id="84216">
    <property type="hits" value="9 hits in 1150 CRISPR screens"/>
</dbReference>
<dbReference type="ChiTaRS" id="TMEM117">
    <property type="organism name" value="human"/>
</dbReference>
<dbReference type="GeneWiki" id="TMEM117"/>
<dbReference type="GenomeRNAi" id="84216"/>
<dbReference type="Pharos" id="Q9H0C3">
    <property type="development level" value="Tbio"/>
</dbReference>
<dbReference type="PRO" id="PR:Q9H0C3"/>
<dbReference type="Proteomes" id="UP000005640">
    <property type="component" value="Chromosome 12"/>
</dbReference>
<dbReference type="RNAct" id="Q9H0C3">
    <property type="molecule type" value="protein"/>
</dbReference>
<dbReference type="Bgee" id="ENSG00000139173">
    <property type="expression patterns" value="Expressed in cardiac muscle of right atrium and 174 other cell types or tissues"/>
</dbReference>
<dbReference type="ExpressionAtlas" id="Q9H0C3">
    <property type="expression patterns" value="baseline and differential"/>
</dbReference>
<dbReference type="GO" id="GO:0005783">
    <property type="term" value="C:endoplasmic reticulum"/>
    <property type="evidence" value="ECO:0000314"/>
    <property type="project" value="LIFEdb"/>
</dbReference>
<dbReference type="GO" id="GO:0005886">
    <property type="term" value="C:plasma membrane"/>
    <property type="evidence" value="ECO:0000314"/>
    <property type="project" value="UniProtKB"/>
</dbReference>
<dbReference type="GO" id="GO:0070059">
    <property type="term" value="P:intrinsic apoptotic signaling pathway in response to endoplasmic reticulum stress"/>
    <property type="evidence" value="ECO:0000315"/>
    <property type="project" value="UniProtKB"/>
</dbReference>
<dbReference type="InterPro" id="IPR029370">
    <property type="entry name" value="TMEM117"/>
</dbReference>
<dbReference type="PANTHER" id="PTHR31226">
    <property type="entry name" value="TRANSMEMBRANE PROTEIN 117"/>
    <property type="match status" value="1"/>
</dbReference>
<dbReference type="PANTHER" id="PTHR31226:SF1">
    <property type="entry name" value="TRANSMEMBRANE PROTEIN 117"/>
    <property type="match status" value="1"/>
</dbReference>
<dbReference type="Pfam" id="PF15113">
    <property type="entry name" value="TMEM117"/>
    <property type="match status" value="1"/>
</dbReference>
<name>TM117_HUMAN</name>
<reference key="1">
    <citation type="journal article" date="2001" name="Genome Res.">
        <title>Towards a catalog of human genes and proteins: sequencing and analysis of 500 novel complete protein coding human cDNAs.</title>
        <authorList>
            <person name="Wiemann S."/>
            <person name="Weil B."/>
            <person name="Wellenreuther R."/>
            <person name="Gassenhuber J."/>
            <person name="Glassl S."/>
            <person name="Ansorge W."/>
            <person name="Boecher M."/>
            <person name="Bloecker H."/>
            <person name="Bauersachs S."/>
            <person name="Blum H."/>
            <person name="Lauber J."/>
            <person name="Duesterhoeft A."/>
            <person name="Beyer A."/>
            <person name="Koehrer K."/>
            <person name="Strack N."/>
            <person name="Mewes H.-W."/>
            <person name="Ottenwaelder B."/>
            <person name="Obermaier B."/>
            <person name="Tampe J."/>
            <person name="Heubner D."/>
            <person name="Wambutt R."/>
            <person name="Korn B."/>
            <person name="Klein M."/>
            <person name="Poustka A."/>
        </authorList>
    </citation>
    <scope>NUCLEOTIDE SEQUENCE [LARGE SCALE MRNA]</scope>
    <source>
        <tissue>Testis</tissue>
    </source>
</reference>
<reference key="2">
    <citation type="journal article" date="2004" name="Nat. Genet.">
        <title>Complete sequencing and characterization of 21,243 full-length human cDNAs.</title>
        <authorList>
            <person name="Ota T."/>
            <person name="Suzuki Y."/>
            <person name="Nishikawa T."/>
            <person name="Otsuki T."/>
            <person name="Sugiyama T."/>
            <person name="Irie R."/>
            <person name="Wakamatsu A."/>
            <person name="Hayashi K."/>
            <person name="Sato H."/>
            <person name="Nagai K."/>
            <person name="Kimura K."/>
            <person name="Makita H."/>
            <person name="Sekine M."/>
            <person name="Obayashi M."/>
            <person name="Nishi T."/>
            <person name="Shibahara T."/>
            <person name="Tanaka T."/>
            <person name="Ishii S."/>
            <person name="Yamamoto J."/>
            <person name="Saito K."/>
            <person name="Kawai Y."/>
            <person name="Isono Y."/>
            <person name="Nakamura Y."/>
            <person name="Nagahari K."/>
            <person name="Murakami K."/>
            <person name="Yasuda T."/>
            <person name="Iwayanagi T."/>
            <person name="Wagatsuma M."/>
            <person name="Shiratori A."/>
            <person name="Sudo H."/>
            <person name="Hosoiri T."/>
            <person name="Kaku Y."/>
            <person name="Kodaira H."/>
            <person name="Kondo H."/>
            <person name="Sugawara M."/>
            <person name="Takahashi M."/>
            <person name="Kanda K."/>
            <person name="Yokoi T."/>
            <person name="Furuya T."/>
            <person name="Kikkawa E."/>
            <person name="Omura Y."/>
            <person name="Abe K."/>
            <person name="Kamihara K."/>
            <person name="Katsuta N."/>
            <person name="Sato K."/>
            <person name="Tanikawa M."/>
            <person name="Yamazaki M."/>
            <person name="Ninomiya K."/>
            <person name="Ishibashi T."/>
            <person name="Yamashita H."/>
            <person name="Murakawa K."/>
            <person name="Fujimori K."/>
            <person name="Tanai H."/>
            <person name="Kimata M."/>
            <person name="Watanabe M."/>
            <person name="Hiraoka S."/>
            <person name="Chiba Y."/>
            <person name="Ishida S."/>
            <person name="Ono Y."/>
            <person name="Takiguchi S."/>
            <person name="Watanabe S."/>
            <person name="Yosida M."/>
            <person name="Hotuta T."/>
            <person name="Kusano J."/>
            <person name="Kanehori K."/>
            <person name="Takahashi-Fujii A."/>
            <person name="Hara H."/>
            <person name="Tanase T.-O."/>
            <person name="Nomura Y."/>
            <person name="Togiya S."/>
            <person name="Komai F."/>
            <person name="Hara R."/>
            <person name="Takeuchi K."/>
            <person name="Arita M."/>
            <person name="Imose N."/>
            <person name="Musashino K."/>
            <person name="Yuuki H."/>
            <person name="Oshima A."/>
            <person name="Sasaki N."/>
            <person name="Aotsuka S."/>
            <person name="Yoshikawa Y."/>
            <person name="Matsunawa H."/>
            <person name="Ichihara T."/>
            <person name="Shiohata N."/>
            <person name="Sano S."/>
            <person name="Moriya S."/>
            <person name="Momiyama H."/>
            <person name="Satoh N."/>
            <person name="Takami S."/>
            <person name="Terashima Y."/>
            <person name="Suzuki O."/>
            <person name="Nakagawa S."/>
            <person name="Senoh A."/>
            <person name="Mizoguchi H."/>
            <person name="Goto Y."/>
            <person name="Shimizu F."/>
            <person name="Wakebe H."/>
            <person name="Hishigaki H."/>
            <person name="Watanabe T."/>
            <person name="Sugiyama A."/>
            <person name="Takemoto M."/>
            <person name="Kawakami B."/>
            <person name="Yamazaki M."/>
            <person name="Watanabe K."/>
            <person name="Kumagai A."/>
            <person name="Itakura S."/>
            <person name="Fukuzumi Y."/>
            <person name="Fujimori Y."/>
            <person name="Komiyama M."/>
            <person name="Tashiro H."/>
            <person name="Tanigami A."/>
            <person name="Fujiwara T."/>
            <person name="Ono T."/>
            <person name="Yamada K."/>
            <person name="Fujii Y."/>
            <person name="Ozaki K."/>
            <person name="Hirao M."/>
            <person name="Ohmori Y."/>
            <person name="Kawabata A."/>
            <person name="Hikiji T."/>
            <person name="Kobatake N."/>
            <person name="Inagaki H."/>
            <person name="Ikema Y."/>
            <person name="Okamoto S."/>
            <person name="Okitani R."/>
            <person name="Kawakami T."/>
            <person name="Noguchi S."/>
            <person name="Itoh T."/>
            <person name="Shigeta K."/>
            <person name="Senba T."/>
            <person name="Matsumura K."/>
            <person name="Nakajima Y."/>
            <person name="Mizuno T."/>
            <person name="Morinaga M."/>
            <person name="Sasaki M."/>
            <person name="Togashi T."/>
            <person name="Oyama M."/>
            <person name="Hata H."/>
            <person name="Watanabe M."/>
            <person name="Komatsu T."/>
            <person name="Mizushima-Sugano J."/>
            <person name="Satoh T."/>
            <person name="Shirai Y."/>
            <person name="Takahashi Y."/>
            <person name="Nakagawa K."/>
            <person name="Okumura K."/>
            <person name="Nagase T."/>
            <person name="Nomura N."/>
            <person name="Kikuchi H."/>
            <person name="Masuho Y."/>
            <person name="Yamashita R."/>
            <person name="Nakai K."/>
            <person name="Yada T."/>
            <person name="Nakamura Y."/>
            <person name="Ohara O."/>
            <person name="Isogai T."/>
            <person name="Sugano S."/>
        </authorList>
    </citation>
    <scope>NUCLEOTIDE SEQUENCE [LARGE SCALE MRNA]</scope>
    <source>
        <tissue>Testis</tissue>
    </source>
</reference>
<reference key="3">
    <citation type="journal article" date="2004" name="Genome Res.">
        <title>The status, quality, and expansion of the NIH full-length cDNA project: the Mammalian Gene Collection (MGC).</title>
        <authorList>
            <consortium name="The MGC Project Team"/>
        </authorList>
    </citation>
    <scope>NUCLEOTIDE SEQUENCE [LARGE SCALE MRNA]</scope>
    <source>
        <tissue>Placenta</tissue>
    </source>
</reference>
<reference key="4">
    <citation type="journal article" date="2016" name="PLoS ONE">
        <title>Intrinsic disorder in transmembrane proteins: roles in signaling and topology prediction.</title>
        <authorList>
            <person name="Buergi J."/>
            <person name="Xue B."/>
            <person name="Uversky V.N."/>
            <person name="van der Goot F.G."/>
        </authorList>
    </citation>
    <scope>SUBCELLULAR LOCATION</scope>
    <scope>TOPOLOGY</scope>
    <scope>GLYCOSYLATION AT ASN-353 AND ASN-371</scope>
    <scope>MUTAGENESIS OF ASN-353 AND ASN-371</scope>
</reference>
<reference key="5">
    <citation type="journal article" date="2017" name="Biochem. Biophys. Res. Commun.">
        <title>A novel transmembrane protein defines the endoplasmic reticulum stress-induced cell death pathway.</title>
        <authorList>
            <person name="Tamaki T."/>
            <person name="Kamatsuka K."/>
            <person name="Sato T."/>
            <person name="Morooka S."/>
            <person name="Otsuka K."/>
            <person name="Hattori M."/>
            <person name="Sugiyama T."/>
        </authorList>
    </citation>
    <scope>FUNCTION</scope>
</reference>
<comment type="function">
    <text evidence="5">Involved in endoplasmic reticulum (ER) stress-induced cell death pathway.</text>
</comment>
<comment type="subcellular location">
    <subcellularLocation>
        <location evidence="4">Cell membrane</location>
        <topology evidence="2">Multi-pass membrane protein</topology>
    </subcellularLocation>
</comment>
<comment type="similarity">
    <text evidence="6">Belongs to the TMEM117 family.</text>
</comment>